<sequence length="427" mass="47156">MAGKNVEKRDNQTLCCSFCGKSQKEVKKLIAGPTVYICDECIGLCNDIIAEEIDREETKDTKLRIPRPSEIKAVLDEYVIGQERAKKTLSVAVHNHYKRIESKVAMEDVELQKSNILLLGPTGSGKTLLAQTLARILNVPFTIADATCLTEAGYVGEDVENIIVNLLQAADHDIERAQRGIVYIDEIDKIARKSENPSITRDVSGEGVQQALLKLIEGTVANVPPKGGRKHPQQEFLQVDTTNILFICGGAFGGLDQVIERRMGGRSLGFGADVQSKKQRSLTELLKHVEPEDLLKFGMIPEFIGRLPIITALEELDEAALINILNQPKNALTKQYRKLFELDGVTLKFTDGALKAIANEAIRRKAGARGLRSILESAMLDVMYEIPSRKTAREVLISEEVILKKSEPVVLHAQPEKEAAEPKKESA</sequence>
<proteinExistence type="inferred from homology"/>
<gene>
    <name evidence="1" type="primary">clpX</name>
</gene>
<evidence type="ECO:0000255" key="1">
    <source>
        <dbReference type="HAMAP-Rule" id="MF_00175"/>
    </source>
</evidence>
<evidence type="ECO:0000255" key="2">
    <source>
        <dbReference type="PROSITE-ProRule" id="PRU01250"/>
    </source>
</evidence>
<reference key="1">
    <citation type="submission" date="1999-02" db="EMBL/GenBank/DDBJ databases">
        <authorList>
            <person name="Ueki T."/>
            <person name="Inouye S."/>
        </authorList>
    </citation>
    <scope>NUCLEOTIDE SEQUENCE [GENOMIC DNA]</scope>
    <source>
        <strain>DZF1</strain>
    </source>
</reference>
<keyword id="KW-0067">ATP-binding</keyword>
<keyword id="KW-0143">Chaperone</keyword>
<keyword id="KW-0479">Metal-binding</keyword>
<keyword id="KW-0547">Nucleotide-binding</keyword>
<keyword id="KW-0862">Zinc</keyword>
<protein>
    <recommendedName>
        <fullName evidence="1">ATP-dependent Clp protease ATP-binding subunit ClpX</fullName>
    </recommendedName>
</protein>
<comment type="function">
    <text evidence="1">ATP-dependent specificity component of the Clp protease. It directs the protease to specific substrates. Can perform chaperone functions in the absence of ClpP.</text>
</comment>
<comment type="subunit">
    <text evidence="1">Component of the ClpX-ClpP complex. Forms a hexameric ring that, in the presence of ATP, binds to fourteen ClpP subunits assembled into a disk-like structure with a central cavity, resembling the structure of eukaryotic proteasomes.</text>
</comment>
<comment type="similarity">
    <text evidence="1">Belongs to the ClpX chaperone family.</text>
</comment>
<feature type="chain" id="PRO_0000160389" description="ATP-dependent Clp protease ATP-binding subunit ClpX">
    <location>
        <begin position="1"/>
        <end position="427"/>
    </location>
</feature>
<feature type="domain" description="ClpX-type ZB" evidence="2">
    <location>
        <begin position="3"/>
        <end position="57"/>
    </location>
</feature>
<feature type="binding site" evidence="2">
    <location>
        <position position="16"/>
    </location>
    <ligand>
        <name>Zn(2+)</name>
        <dbReference type="ChEBI" id="CHEBI:29105"/>
    </ligand>
</feature>
<feature type="binding site" evidence="2">
    <location>
        <position position="19"/>
    </location>
    <ligand>
        <name>Zn(2+)</name>
        <dbReference type="ChEBI" id="CHEBI:29105"/>
    </ligand>
</feature>
<feature type="binding site" evidence="2">
    <location>
        <position position="38"/>
    </location>
    <ligand>
        <name>Zn(2+)</name>
        <dbReference type="ChEBI" id="CHEBI:29105"/>
    </ligand>
</feature>
<feature type="binding site" evidence="2">
    <location>
        <position position="41"/>
    </location>
    <ligand>
        <name>Zn(2+)</name>
        <dbReference type="ChEBI" id="CHEBI:29105"/>
    </ligand>
</feature>
<feature type="binding site" evidence="1">
    <location>
        <begin position="121"/>
        <end position="128"/>
    </location>
    <ligand>
        <name>ATP</name>
        <dbReference type="ChEBI" id="CHEBI:30616"/>
    </ligand>
</feature>
<name>CLPX_MYXXA</name>
<organism>
    <name type="scientific">Myxococcus xanthus</name>
    <dbReference type="NCBI Taxonomy" id="34"/>
    <lineage>
        <taxon>Bacteria</taxon>
        <taxon>Pseudomonadati</taxon>
        <taxon>Myxococcota</taxon>
        <taxon>Myxococcia</taxon>
        <taxon>Myxococcales</taxon>
        <taxon>Cystobacterineae</taxon>
        <taxon>Myxococcaceae</taxon>
        <taxon>Myxococcus</taxon>
    </lineage>
</organism>
<accession>Q9X5N1</accession>
<dbReference type="EMBL" id="AF127082">
    <property type="protein sequence ID" value="AAD31003.1"/>
    <property type="molecule type" value="Genomic_DNA"/>
</dbReference>
<dbReference type="RefSeq" id="WP_011552099.1">
    <property type="nucleotide sequence ID" value="NZ_JABFNT010000030.1"/>
</dbReference>
<dbReference type="SMR" id="Q9X5N1"/>
<dbReference type="GeneID" id="41359425"/>
<dbReference type="OMA" id="LDTMFDL"/>
<dbReference type="GO" id="GO:0009376">
    <property type="term" value="C:HslUV protease complex"/>
    <property type="evidence" value="ECO:0007669"/>
    <property type="project" value="TreeGrafter"/>
</dbReference>
<dbReference type="GO" id="GO:0005524">
    <property type="term" value="F:ATP binding"/>
    <property type="evidence" value="ECO:0007669"/>
    <property type="project" value="UniProtKB-UniRule"/>
</dbReference>
<dbReference type="GO" id="GO:0016887">
    <property type="term" value="F:ATP hydrolysis activity"/>
    <property type="evidence" value="ECO:0007669"/>
    <property type="project" value="InterPro"/>
</dbReference>
<dbReference type="GO" id="GO:0140662">
    <property type="term" value="F:ATP-dependent protein folding chaperone"/>
    <property type="evidence" value="ECO:0007669"/>
    <property type="project" value="InterPro"/>
</dbReference>
<dbReference type="GO" id="GO:0046983">
    <property type="term" value="F:protein dimerization activity"/>
    <property type="evidence" value="ECO:0007669"/>
    <property type="project" value="InterPro"/>
</dbReference>
<dbReference type="GO" id="GO:0051082">
    <property type="term" value="F:unfolded protein binding"/>
    <property type="evidence" value="ECO:0007669"/>
    <property type="project" value="UniProtKB-UniRule"/>
</dbReference>
<dbReference type="GO" id="GO:0008270">
    <property type="term" value="F:zinc ion binding"/>
    <property type="evidence" value="ECO:0007669"/>
    <property type="project" value="InterPro"/>
</dbReference>
<dbReference type="GO" id="GO:0051301">
    <property type="term" value="P:cell division"/>
    <property type="evidence" value="ECO:0007669"/>
    <property type="project" value="TreeGrafter"/>
</dbReference>
<dbReference type="GO" id="GO:0051603">
    <property type="term" value="P:proteolysis involved in protein catabolic process"/>
    <property type="evidence" value="ECO:0007669"/>
    <property type="project" value="TreeGrafter"/>
</dbReference>
<dbReference type="CDD" id="cd19497">
    <property type="entry name" value="RecA-like_ClpX"/>
    <property type="match status" value="1"/>
</dbReference>
<dbReference type="FunFam" id="1.10.8.60:FF:000002">
    <property type="entry name" value="ATP-dependent Clp protease ATP-binding subunit ClpX"/>
    <property type="match status" value="1"/>
</dbReference>
<dbReference type="FunFam" id="3.40.50.300:FF:000005">
    <property type="entry name" value="ATP-dependent Clp protease ATP-binding subunit ClpX"/>
    <property type="match status" value="1"/>
</dbReference>
<dbReference type="Gene3D" id="1.10.8.60">
    <property type="match status" value="1"/>
</dbReference>
<dbReference type="Gene3D" id="6.20.220.10">
    <property type="entry name" value="ClpX chaperone, C4-type zinc finger domain"/>
    <property type="match status" value="1"/>
</dbReference>
<dbReference type="Gene3D" id="3.40.50.300">
    <property type="entry name" value="P-loop containing nucleotide triphosphate hydrolases"/>
    <property type="match status" value="1"/>
</dbReference>
<dbReference type="HAMAP" id="MF_00175">
    <property type="entry name" value="ClpX"/>
    <property type="match status" value="1"/>
</dbReference>
<dbReference type="InterPro" id="IPR003593">
    <property type="entry name" value="AAA+_ATPase"/>
</dbReference>
<dbReference type="InterPro" id="IPR050052">
    <property type="entry name" value="ATP-dep_Clp_protease_ClpX"/>
</dbReference>
<dbReference type="InterPro" id="IPR003959">
    <property type="entry name" value="ATPase_AAA_core"/>
</dbReference>
<dbReference type="InterPro" id="IPR019489">
    <property type="entry name" value="Clp_ATPase_C"/>
</dbReference>
<dbReference type="InterPro" id="IPR004487">
    <property type="entry name" value="Clp_protease_ATP-bd_su_ClpX"/>
</dbReference>
<dbReference type="InterPro" id="IPR046425">
    <property type="entry name" value="ClpX_bact"/>
</dbReference>
<dbReference type="InterPro" id="IPR027417">
    <property type="entry name" value="P-loop_NTPase"/>
</dbReference>
<dbReference type="InterPro" id="IPR010603">
    <property type="entry name" value="Znf_CppX_C4"/>
</dbReference>
<dbReference type="InterPro" id="IPR038366">
    <property type="entry name" value="Znf_CppX_C4_sf"/>
</dbReference>
<dbReference type="NCBIfam" id="TIGR00382">
    <property type="entry name" value="clpX"/>
    <property type="match status" value="1"/>
</dbReference>
<dbReference type="NCBIfam" id="NF003745">
    <property type="entry name" value="PRK05342.1"/>
    <property type="match status" value="1"/>
</dbReference>
<dbReference type="PANTHER" id="PTHR48102:SF7">
    <property type="entry name" value="ATP-DEPENDENT CLP PROTEASE ATP-BINDING SUBUNIT CLPX-LIKE, MITOCHONDRIAL"/>
    <property type="match status" value="1"/>
</dbReference>
<dbReference type="PANTHER" id="PTHR48102">
    <property type="entry name" value="ATP-DEPENDENT CLP PROTEASE ATP-BINDING SUBUNIT CLPX-LIKE, MITOCHONDRIAL-RELATED"/>
    <property type="match status" value="1"/>
</dbReference>
<dbReference type="Pfam" id="PF07724">
    <property type="entry name" value="AAA_2"/>
    <property type="match status" value="1"/>
</dbReference>
<dbReference type="Pfam" id="PF10431">
    <property type="entry name" value="ClpB_D2-small"/>
    <property type="match status" value="1"/>
</dbReference>
<dbReference type="Pfam" id="PF06689">
    <property type="entry name" value="zf-C4_ClpX"/>
    <property type="match status" value="1"/>
</dbReference>
<dbReference type="SMART" id="SM00382">
    <property type="entry name" value="AAA"/>
    <property type="match status" value="1"/>
</dbReference>
<dbReference type="SMART" id="SM01086">
    <property type="entry name" value="ClpB_D2-small"/>
    <property type="match status" value="1"/>
</dbReference>
<dbReference type="SMART" id="SM00994">
    <property type="entry name" value="zf-C4_ClpX"/>
    <property type="match status" value="1"/>
</dbReference>
<dbReference type="SUPFAM" id="SSF57716">
    <property type="entry name" value="Glucocorticoid receptor-like (DNA-binding domain)"/>
    <property type="match status" value="1"/>
</dbReference>
<dbReference type="SUPFAM" id="SSF52540">
    <property type="entry name" value="P-loop containing nucleoside triphosphate hydrolases"/>
    <property type="match status" value="1"/>
</dbReference>
<dbReference type="PROSITE" id="PS51902">
    <property type="entry name" value="CLPX_ZB"/>
    <property type="match status" value="1"/>
</dbReference>